<evidence type="ECO:0000250" key="1">
    <source>
        <dbReference type="UniProtKB" id="P83337"/>
    </source>
</evidence>
<evidence type="ECO:0000250" key="2">
    <source>
        <dbReference type="UniProtKB" id="Q6EV70"/>
    </source>
</evidence>
<evidence type="ECO:0000250" key="3">
    <source>
        <dbReference type="UniProtKB" id="Q9H488"/>
    </source>
</evidence>
<evidence type="ECO:0000255" key="4"/>
<evidence type="ECO:0000269" key="5">
    <source>
    </source>
</evidence>
<evidence type="ECO:0000269" key="6">
    <source>
    </source>
</evidence>
<evidence type="ECO:0000305" key="7"/>
<evidence type="ECO:0000305" key="8">
    <source>
    </source>
</evidence>
<evidence type="ECO:0000305" key="9">
    <source>
    </source>
</evidence>
<evidence type="ECO:0007829" key="10">
    <source>
        <dbReference type="PDB" id="5KXH"/>
    </source>
</evidence>
<evidence type="ECO:0007829" key="11">
    <source>
        <dbReference type="PDB" id="5KY2"/>
    </source>
</evidence>
<evidence type="ECO:0007829" key="12">
    <source>
        <dbReference type="PDB" id="5KY4"/>
    </source>
</evidence>
<evidence type="ECO:0007829" key="13">
    <source>
        <dbReference type="PDB" id="5KY8"/>
    </source>
</evidence>
<evidence type="ECO:0007829" key="14">
    <source>
        <dbReference type="PDB" id="5KY9"/>
    </source>
</evidence>
<sequence length="393" mass="44688">MGAAAWAPPHLLLRASFLLLLLLLPLRGRSAGSWDLAGYLLYCPCMGRFGNQADHFLGSLAFAKLLNRTLAVPPWIEYQHHKPPFTNLHVSYQKYFKLEPLQAYHRVVSLEDFMENLAPSHWPPEKRVAYCFEVAAQRSPDKKTCPMKEGNPFGPFWDQFHVSFNKSELFTGISFSASYKEQWTQRFPAKEHPVLALPGAPAQFPVLEEHRELQKYMVWSDEMVRTGEALISAHLVRPYVGIHLRIGSDWKNACAMLKDGTAGSHFMASPQCVGYSRSTATPLTMTMCLPDLKEIQRAVTLWVRALNARSVYIATDSESYVSEIQQLFKDKVRVVSLKPEVAQIDLYILGQADHFIGNCVSSFTAFVKRERDLHGRQSSFFGMDRPSQLRDEF</sequence>
<proteinExistence type="evidence at protein level"/>
<feature type="signal peptide" evidence="4">
    <location>
        <begin position="1"/>
        <end position="30"/>
    </location>
</feature>
<feature type="chain" id="PRO_0000012149" description="GDP-fucose protein O-fucosyltransferase 1">
    <location>
        <begin position="31"/>
        <end position="393"/>
    </location>
</feature>
<feature type="short sequence motif" description="Prevents secretion from ER" evidence="4">
    <location>
        <begin position="390"/>
        <end position="393"/>
    </location>
</feature>
<feature type="binding site" evidence="3">
    <location>
        <begin position="48"/>
        <end position="51"/>
    </location>
    <ligand>
        <name>substrate</name>
    </ligand>
</feature>
<feature type="binding site" evidence="3">
    <location>
        <begin position="243"/>
        <end position="245"/>
    </location>
    <ligand>
        <name>substrate</name>
    </ligand>
</feature>
<feature type="binding site" evidence="3">
    <location>
        <position position="345"/>
    </location>
    <ligand>
        <name>substrate</name>
    </ligand>
</feature>
<feature type="binding site" evidence="3">
    <location>
        <begin position="362"/>
        <end position="363"/>
    </location>
    <ligand>
        <name>substrate</name>
    </ligand>
</feature>
<feature type="glycosylation site" description="N-linked (GlcNAc...) asparagine" evidence="4">
    <location>
        <position position="67"/>
    </location>
</feature>
<feature type="glycosylation site" description="N-linked (GlcNAc...) asparagine" evidence="4">
    <location>
        <position position="165"/>
    </location>
</feature>
<feature type="disulfide bond" evidence="3">
    <location>
        <begin position="43"/>
        <end position="45"/>
    </location>
</feature>
<feature type="disulfide bond" evidence="3">
    <location>
        <begin position="131"/>
        <end position="145"/>
    </location>
</feature>
<feature type="disulfide bond" evidence="3">
    <location>
        <begin position="254"/>
        <end position="288"/>
    </location>
</feature>
<feature type="disulfide bond" evidence="3">
    <location>
        <begin position="272"/>
        <end position="359"/>
    </location>
</feature>
<feature type="sequence conflict" description="In Ref. 2; BAC32009." evidence="7" ref="2">
    <original>A</original>
    <variation>S</variation>
    <location>
        <position position="233"/>
    </location>
</feature>
<feature type="strand" evidence="10">
    <location>
        <begin position="39"/>
        <end position="42"/>
    </location>
</feature>
<feature type="strand" evidence="10">
    <location>
        <begin position="46"/>
        <end position="48"/>
    </location>
</feature>
<feature type="helix" evidence="10">
    <location>
        <begin position="49"/>
        <end position="66"/>
    </location>
</feature>
<feature type="strand" evidence="10">
    <location>
        <begin position="69"/>
        <end position="72"/>
    </location>
</feature>
<feature type="strand" evidence="10">
    <location>
        <begin position="75"/>
        <end position="77"/>
    </location>
</feature>
<feature type="strand" evidence="10">
    <location>
        <begin position="88"/>
        <end position="90"/>
    </location>
</feature>
<feature type="helix" evidence="10">
    <location>
        <begin position="92"/>
        <end position="95"/>
    </location>
</feature>
<feature type="helix" evidence="10">
    <location>
        <begin position="99"/>
        <end position="103"/>
    </location>
</feature>
<feature type="strand" evidence="10">
    <location>
        <begin position="107"/>
        <end position="109"/>
    </location>
</feature>
<feature type="helix" evidence="10">
    <location>
        <begin position="110"/>
        <end position="116"/>
    </location>
</feature>
<feature type="helix" evidence="10">
    <location>
        <begin position="118"/>
        <end position="121"/>
    </location>
</feature>
<feature type="helix" evidence="10">
    <location>
        <begin position="124"/>
        <end position="126"/>
    </location>
</feature>
<feature type="strand" evidence="10">
    <location>
        <begin position="128"/>
        <end position="132"/>
    </location>
</feature>
<feature type="helix" evidence="10">
    <location>
        <begin position="133"/>
        <end position="137"/>
    </location>
</feature>
<feature type="strand" evidence="10">
    <location>
        <begin position="142"/>
        <end position="144"/>
    </location>
</feature>
<feature type="strand" evidence="12">
    <location>
        <begin position="147"/>
        <end position="150"/>
    </location>
</feature>
<feature type="helix" evidence="10">
    <location>
        <begin position="153"/>
        <end position="158"/>
    </location>
</feature>
<feature type="turn" evidence="10">
    <location>
        <begin position="159"/>
        <end position="161"/>
    </location>
</feature>
<feature type="strand" evidence="10">
    <location>
        <begin position="165"/>
        <end position="170"/>
    </location>
</feature>
<feature type="helix" evidence="10">
    <location>
        <begin position="177"/>
        <end position="179"/>
    </location>
</feature>
<feature type="helix" evidence="10">
    <location>
        <begin position="180"/>
        <end position="186"/>
    </location>
</feature>
<feature type="turn" evidence="10">
    <location>
        <begin position="189"/>
        <end position="191"/>
    </location>
</feature>
<feature type="strand" evidence="10">
    <location>
        <begin position="193"/>
        <end position="199"/>
    </location>
</feature>
<feature type="helix" evidence="10">
    <location>
        <begin position="208"/>
        <end position="216"/>
    </location>
</feature>
<feature type="helix" evidence="10">
    <location>
        <begin position="221"/>
        <end position="234"/>
    </location>
</feature>
<feature type="strand" evidence="10">
    <location>
        <begin position="237"/>
        <end position="244"/>
    </location>
</feature>
<feature type="helix" evidence="10">
    <location>
        <begin position="248"/>
        <end position="250"/>
    </location>
</feature>
<feature type="helix" evidence="10">
    <location>
        <begin position="251"/>
        <end position="255"/>
    </location>
</feature>
<feature type="strand" evidence="14">
    <location>
        <begin position="260"/>
        <end position="262"/>
    </location>
</feature>
<feature type="turn" evidence="10">
    <location>
        <begin position="267"/>
        <end position="269"/>
    </location>
</feature>
<feature type="helix" evidence="10">
    <location>
        <begin position="270"/>
        <end position="273"/>
    </location>
</feature>
<feature type="strand" evidence="13">
    <location>
        <begin position="275"/>
        <end position="278"/>
    </location>
</feature>
<feature type="helix" evidence="10">
    <location>
        <begin position="285"/>
        <end position="288"/>
    </location>
</feature>
<feature type="helix" evidence="10">
    <location>
        <begin position="292"/>
        <end position="306"/>
    </location>
</feature>
<feature type="strand" evidence="10">
    <location>
        <begin position="309"/>
        <end position="317"/>
    </location>
</feature>
<feature type="helix" evidence="10">
    <location>
        <begin position="321"/>
        <end position="325"/>
    </location>
</feature>
<feature type="turn" evidence="11">
    <location>
        <begin position="326"/>
        <end position="330"/>
    </location>
</feature>
<feature type="strand" evidence="10">
    <location>
        <begin position="332"/>
        <end position="336"/>
    </location>
</feature>
<feature type="helix" evidence="10">
    <location>
        <begin position="342"/>
        <end position="350"/>
    </location>
</feature>
<feature type="strand" evidence="10">
    <location>
        <begin position="353"/>
        <end position="357"/>
    </location>
</feature>
<feature type="helix" evidence="10">
    <location>
        <begin position="362"/>
        <end position="373"/>
    </location>
</feature>
<feature type="strand" evidence="10">
    <location>
        <begin position="378"/>
        <end position="380"/>
    </location>
</feature>
<keyword id="KW-0002">3D-structure</keyword>
<keyword id="KW-0119">Carbohydrate metabolism</keyword>
<keyword id="KW-1015">Disulfide bond</keyword>
<keyword id="KW-0256">Endoplasmic reticulum</keyword>
<keyword id="KW-0294">Fucose metabolism</keyword>
<keyword id="KW-0325">Glycoprotein</keyword>
<keyword id="KW-0328">Glycosyltransferase</keyword>
<keyword id="KW-0464">Manganese</keyword>
<keyword id="KW-0914">Notch signaling pathway</keyword>
<keyword id="KW-1185">Reference proteome</keyword>
<keyword id="KW-0732">Signal</keyword>
<keyword id="KW-0808">Transferase</keyword>
<accession>Q91ZW2</accession>
<accession>Q3V1R0</accession>
<accession>Q8C8R4</accession>
<reference key="1">
    <citation type="journal article" date="2001" name="J. Biol. Chem.">
        <title>Modification of epidermal growth factor-like repeats with O-fucose: molecular cloning and expression of a novel GDP-fucose protein O-fucosyltransferase.</title>
        <authorList>
            <person name="Wang Y."/>
            <person name="Shao L."/>
            <person name="Shi S."/>
            <person name="Harris R.J."/>
            <person name="Spellman M.W."/>
            <person name="Stanley P."/>
            <person name="Haltiwanger R.S."/>
        </authorList>
    </citation>
    <scope>NUCLEOTIDE SEQUENCE [MRNA]</scope>
    <source>
        <strain>129/SvJ</strain>
        <tissue>Liver</tissue>
    </source>
</reference>
<reference key="2">
    <citation type="journal article" date="2005" name="Science">
        <title>The transcriptional landscape of the mammalian genome.</title>
        <authorList>
            <person name="Carninci P."/>
            <person name="Kasukawa T."/>
            <person name="Katayama S."/>
            <person name="Gough J."/>
            <person name="Frith M.C."/>
            <person name="Maeda N."/>
            <person name="Oyama R."/>
            <person name="Ravasi T."/>
            <person name="Lenhard B."/>
            <person name="Wells C."/>
            <person name="Kodzius R."/>
            <person name="Shimokawa K."/>
            <person name="Bajic V.B."/>
            <person name="Brenner S.E."/>
            <person name="Batalov S."/>
            <person name="Forrest A.R."/>
            <person name="Zavolan M."/>
            <person name="Davis M.J."/>
            <person name="Wilming L.G."/>
            <person name="Aidinis V."/>
            <person name="Allen J.E."/>
            <person name="Ambesi-Impiombato A."/>
            <person name="Apweiler R."/>
            <person name="Aturaliya R.N."/>
            <person name="Bailey T.L."/>
            <person name="Bansal M."/>
            <person name="Baxter L."/>
            <person name="Beisel K.W."/>
            <person name="Bersano T."/>
            <person name="Bono H."/>
            <person name="Chalk A.M."/>
            <person name="Chiu K.P."/>
            <person name="Choudhary V."/>
            <person name="Christoffels A."/>
            <person name="Clutterbuck D.R."/>
            <person name="Crowe M.L."/>
            <person name="Dalla E."/>
            <person name="Dalrymple B.P."/>
            <person name="de Bono B."/>
            <person name="Della Gatta G."/>
            <person name="di Bernardo D."/>
            <person name="Down T."/>
            <person name="Engstrom P."/>
            <person name="Fagiolini M."/>
            <person name="Faulkner G."/>
            <person name="Fletcher C.F."/>
            <person name="Fukushima T."/>
            <person name="Furuno M."/>
            <person name="Futaki S."/>
            <person name="Gariboldi M."/>
            <person name="Georgii-Hemming P."/>
            <person name="Gingeras T.R."/>
            <person name="Gojobori T."/>
            <person name="Green R.E."/>
            <person name="Gustincich S."/>
            <person name="Harbers M."/>
            <person name="Hayashi Y."/>
            <person name="Hensch T.K."/>
            <person name="Hirokawa N."/>
            <person name="Hill D."/>
            <person name="Huminiecki L."/>
            <person name="Iacono M."/>
            <person name="Ikeo K."/>
            <person name="Iwama A."/>
            <person name="Ishikawa T."/>
            <person name="Jakt M."/>
            <person name="Kanapin A."/>
            <person name="Katoh M."/>
            <person name="Kawasawa Y."/>
            <person name="Kelso J."/>
            <person name="Kitamura H."/>
            <person name="Kitano H."/>
            <person name="Kollias G."/>
            <person name="Krishnan S.P."/>
            <person name="Kruger A."/>
            <person name="Kummerfeld S.K."/>
            <person name="Kurochkin I.V."/>
            <person name="Lareau L.F."/>
            <person name="Lazarevic D."/>
            <person name="Lipovich L."/>
            <person name="Liu J."/>
            <person name="Liuni S."/>
            <person name="McWilliam S."/>
            <person name="Madan Babu M."/>
            <person name="Madera M."/>
            <person name="Marchionni L."/>
            <person name="Matsuda H."/>
            <person name="Matsuzawa S."/>
            <person name="Miki H."/>
            <person name="Mignone F."/>
            <person name="Miyake S."/>
            <person name="Morris K."/>
            <person name="Mottagui-Tabar S."/>
            <person name="Mulder N."/>
            <person name="Nakano N."/>
            <person name="Nakauchi H."/>
            <person name="Ng P."/>
            <person name="Nilsson R."/>
            <person name="Nishiguchi S."/>
            <person name="Nishikawa S."/>
            <person name="Nori F."/>
            <person name="Ohara O."/>
            <person name="Okazaki Y."/>
            <person name="Orlando V."/>
            <person name="Pang K.C."/>
            <person name="Pavan W.J."/>
            <person name="Pavesi G."/>
            <person name="Pesole G."/>
            <person name="Petrovsky N."/>
            <person name="Piazza S."/>
            <person name="Reed J."/>
            <person name="Reid J.F."/>
            <person name="Ring B.Z."/>
            <person name="Ringwald M."/>
            <person name="Rost B."/>
            <person name="Ruan Y."/>
            <person name="Salzberg S.L."/>
            <person name="Sandelin A."/>
            <person name="Schneider C."/>
            <person name="Schoenbach C."/>
            <person name="Sekiguchi K."/>
            <person name="Semple C.A."/>
            <person name="Seno S."/>
            <person name="Sessa L."/>
            <person name="Sheng Y."/>
            <person name="Shibata Y."/>
            <person name="Shimada H."/>
            <person name="Shimada K."/>
            <person name="Silva D."/>
            <person name="Sinclair B."/>
            <person name="Sperling S."/>
            <person name="Stupka E."/>
            <person name="Sugiura K."/>
            <person name="Sultana R."/>
            <person name="Takenaka Y."/>
            <person name="Taki K."/>
            <person name="Tammoja K."/>
            <person name="Tan S.L."/>
            <person name="Tang S."/>
            <person name="Taylor M.S."/>
            <person name="Tegner J."/>
            <person name="Teichmann S.A."/>
            <person name="Ueda H.R."/>
            <person name="van Nimwegen E."/>
            <person name="Verardo R."/>
            <person name="Wei C.L."/>
            <person name="Yagi K."/>
            <person name="Yamanishi H."/>
            <person name="Zabarovsky E."/>
            <person name="Zhu S."/>
            <person name="Zimmer A."/>
            <person name="Hide W."/>
            <person name="Bult C."/>
            <person name="Grimmond S.M."/>
            <person name="Teasdale R.D."/>
            <person name="Liu E.T."/>
            <person name="Brusic V."/>
            <person name="Quackenbush J."/>
            <person name="Wahlestedt C."/>
            <person name="Mattick J.S."/>
            <person name="Hume D.A."/>
            <person name="Kai C."/>
            <person name="Sasaki D."/>
            <person name="Tomaru Y."/>
            <person name="Fukuda S."/>
            <person name="Kanamori-Katayama M."/>
            <person name="Suzuki M."/>
            <person name="Aoki J."/>
            <person name="Arakawa T."/>
            <person name="Iida J."/>
            <person name="Imamura K."/>
            <person name="Itoh M."/>
            <person name="Kato T."/>
            <person name="Kawaji H."/>
            <person name="Kawagashira N."/>
            <person name="Kawashima T."/>
            <person name="Kojima M."/>
            <person name="Kondo S."/>
            <person name="Konno H."/>
            <person name="Nakano K."/>
            <person name="Ninomiya N."/>
            <person name="Nishio T."/>
            <person name="Okada M."/>
            <person name="Plessy C."/>
            <person name="Shibata K."/>
            <person name="Shiraki T."/>
            <person name="Suzuki S."/>
            <person name="Tagami M."/>
            <person name="Waki K."/>
            <person name="Watahiki A."/>
            <person name="Okamura-Oho Y."/>
            <person name="Suzuki H."/>
            <person name="Kawai J."/>
            <person name="Hayashizaki Y."/>
        </authorList>
    </citation>
    <scope>NUCLEOTIDE SEQUENCE [LARGE SCALE MRNA]</scope>
    <source>
        <strain>C57BL/6J</strain>
        <tissue>Head</tissue>
    </source>
</reference>
<reference key="3">
    <citation type="journal article" date="2004" name="Genome Res.">
        <title>The status, quality, and expansion of the NIH full-length cDNA project: the Mammalian Gene Collection (MGC).</title>
        <authorList>
            <consortium name="The MGC Project Team"/>
        </authorList>
    </citation>
    <scope>NUCLEOTIDE SEQUENCE [LARGE SCALE MRNA]</scope>
    <source>
        <strain>FVB/N-3</strain>
        <tissue>Mammary gland</tissue>
    </source>
</reference>
<reference key="4">
    <citation type="journal article" date="2003" name="Proc. Natl. Acad. Sci. U.S.A.">
        <title>Protein O-fucosyltransferase 1 is an essential component of Notch signaling pathways.</title>
        <authorList>
            <person name="Shi S."/>
            <person name="Stanley P."/>
        </authorList>
    </citation>
    <scope>DISRUPTION PHENOTYPE</scope>
    <scope>DEVELOPMENTAL STAGE</scope>
    <scope>FUNCTION</scope>
</reference>
<reference key="5">
    <citation type="journal article" date="2008" name="Mol. Cell. Neurosci.">
        <title>O-fucosylation of muscle agrin determines its ability to cluster acetylcholine receptors.</title>
        <authorList>
            <person name="Kim M.L."/>
            <person name="Chandrasekharan K."/>
            <person name="Glass M."/>
            <person name="Shi S."/>
            <person name="Stahl M.C."/>
            <person name="Kaspar B."/>
            <person name="Stanley P."/>
            <person name="Martin P.T."/>
        </authorList>
    </citation>
    <scope>FUNCTION</scope>
    <scope>CATALYTIC ACTIVITY</scope>
    <scope>PATHWAY</scope>
</reference>
<reference key="6">
    <citation type="journal article" date="2009" name="BMC Dev. Biol.">
        <title>Notch signalling in the paraxial mesoderm is most sensitive to reduced Pofut1 levels during early mouse development.</title>
        <authorList>
            <person name="Schuster-Gossler K."/>
            <person name="Harris B."/>
            <person name="Johnson K.R."/>
            <person name="Serth J."/>
            <person name="Gossler A."/>
        </authorList>
    </citation>
    <scope>CHARACTERIZATION OF THE CAX MUTATION</scope>
</reference>
<reference key="7">
    <citation type="journal article" date="2010" name="Cell">
        <title>A tissue-specific atlas of mouse protein phosphorylation and expression.</title>
        <authorList>
            <person name="Huttlin E.L."/>
            <person name="Jedrychowski M.P."/>
            <person name="Elias J.E."/>
            <person name="Goswami T."/>
            <person name="Rad R."/>
            <person name="Beausoleil S.A."/>
            <person name="Villen J."/>
            <person name="Haas W."/>
            <person name="Sowa M.E."/>
            <person name="Gygi S.P."/>
        </authorList>
    </citation>
    <scope>IDENTIFICATION BY MASS SPECTROMETRY [LARGE SCALE ANALYSIS]</scope>
    <source>
        <tissue>Heart</tissue>
        <tissue>Kidney</tissue>
        <tissue>Liver</tissue>
        <tissue>Lung</tissue>
        <tissue>Pancreas</tissue>
        <tissue>Spleen</tissue>
        <tissue>Testis</tissue>
    </source>
</reference>
<comment type="function">
    <text evidence="5 6">Catalyzes the reaction that attaches fucose through an O-glycosidic linkage to a conserved serine or threonine residue found in the consensus sequence C2-X(4,5)-[S/T]-C3 of EGF domains, where C2 and C3 are the second and third conserved cysteines. Specifically uses GDP-fucose as donor substrate and proper disulfide pairing of the substrate EGF domains is required for fucose transfer. Plays a crucial role in NOTCH signaling. Initial fucosylation of NOTCH by POFUT1 generates a substrate for FRINGE/RFNG, an acetylglucosaminyltransferase that can then extend the fucosylation on the NOTCH EGF repeats. This extended fucosylation is required for optimal ligand binding and canonical NOTCH signaling induced by DLL1 or JAGGED1. Fucosylates AGRN and determines its ability to cluster acetylcholine receptors (AChRs).</text>
</comment>
<comment type="catalytic activity">
    <reaction evidence="8">
        <text>L-seryl-[protein] + GDP-beta-L-fucose = 3-O-(alpha-L-fucosyl)-L-seryl-[protein] + GDP + H(+)</text>
        <dbReference type="Rhea" id="RHEA:63644"/>
        <dbReference type="Rhea" id="RHEA-COMP:9863"/>
        <dbReference type="Rhea" id="RHEA-COMP:17914"/>
        <dbReference type="ChEBI" id="CHEBI:15378"/>
        <dbReference type="ChEBI" id="CHEBI:29999"/>
        <dbReference type="ChEBI" id="CHEBI:57273"/>
        <dbReference type="ChEBI" id="CHEBI:58189"/>
        <dbReference type="ChEBI" id="CHEBI:189632"/>
        <dbReference type="EC" id="2.4.1.221"/>
    </reaction>
    <physiologicalReaction direction="left-to-right" evidence="8">
        <dbReference type="Rhea" id="RHEA:63645"/>
    </physiologicalReaction>
</comment>
<comment type="catalytic activity">
    <reaction evidence="3">
        <text>L-threonyl-[protein] + GDP-beta-L-fucose = 3-O-(alpha-L-fucosyl)-L-threonyl-[protein] + GDP + H(+)</text>
        <dbReference type="Rhea" id="RHEA:70491"/>
        <dbReference type="Rhea" id="RHEA-COMP:11060"/>
        <dbReference type="Rhea" id="RHEA-COMP:17915"/>
        <dbReference type="ChEBI" id="CHEBI:15378"/>
        <dbReference type="ChEBI" id="CHEBI:30013"/>
        <dbReference type="ChEBI" id="CHEBI:57273"/>
        <dbReference type="ChEBI" id="CHEBI:58189"/>
        <dbReference type="ChEBI" id="CHEBI:189631"/>
        <dbReference type="EC" id="2.4.1.221"/>
    </reaction>
    <physiologicalReaction direction="left-to-right" evidence="3">
        <dbReference type="Rhea" id="RHEA:70492"/>
    </physiologicalReaction>
</comment>
<comment type="pathway">
    <text evidence="8">Protein modification; protein glycosylation.</text>
</comment>
<comment type="subcellular location">
    <subcellularLocation>
        <location evidence="2">Endoplasmic reticulum</location>
    </subcellularLocation>
</comment>
<comment type="developmental stage">
    <text evidence="5">Increased expression throughout embryo development. Ubiquitous expression at 9.5 dpc and 11.5 dpc with lower expression at 9.5 dpc.</text>
</comment>
<comment type="PTM">
    <text evidence="1">N-glycosylated.</text>
</comment>
<comment type="disruption phenotype">
    <text evidence="5">Early embryos of null mice are defective in somitogenesis. At 8.5 dpc, embryos are of normal size and appearance but somites adjacent to the presomitic mesoderm (PSM) are fused. In 8.25 dpc embryos, expression of NOTCH target genes such as HES5 and JAG1 as well as LFNG and UNCX4.1 is severely reduced in somites. There is up-regulation of a number of these genes such as HES5 and LFNG as well as DLL1 and NOTCH1 in the neural tube and brain. Mice die at midgestation with severe defects in somitogenesis, vasculogenesis, cardiogenesis and neurogenesis.</text>
</comment>
<comment type="miscellaneous">
    <text evidence="9">The cax (compact axial skeleton) spontaneous mutation is a hypomorphic allele that reduces Pofut1 expression and protein levels leading to reduced Notch signaling. cax mutant embryos have somites of variable size, partly abnormal Lfng expression, defective anterior-posterior somite patterning and abnormal axial skeleton development. Mice have kinky and shortened tails and shortened body length (PubMed:19161597).</text>
</comment>
<comment type="similarity">
    <text evidence="7">Belongs to the glycosyltransferase 65 family.</text>
</comment>
<comment type="online information" name="Functional Glycomics Gateway - GTase">
    <link uri="http://www.functionalglycomics.org/glycomics/molecule/jsp/glycoEnzyme/viewGlycoEnzyme.jsp?gbpId=gt_mou_619"/>
    <text>Peptide-O-fucosyltransferase 1</text>
</comment>
<gene>
    <name type="primary">Pofut1</name>
</gene>
<name>OFUT1_MOUSE</name>
<organism>
    <name type="scientific">Mus musculus</name>
    <name type="common">Mouse</name>
    <dbReference type="NCBI Taxonomy" id="10090"/>
    <lineage>
        <taxon>Eukaryota</taxon>
        <taxon>Metazoa</taxon>
        <taxon>Chordata</taxon>
        <taxon>Craniata</taxon>
        <taxon>Vertebrata</taxon>
        <taxon>Euteleostomi</taxon>
        <taxon>Mammalia</taxon>
        <taxon>Eutheria</taxon>
        <taxon>Euarchontoglires</taxon>
        <taxon>Glires</taxon>
        <taxon>Rodentia</taxon>
        <taxon>Myomorpha</taxon>
        <taxon>Muroidea</taxon>
        <taxon>Muridae</taxon>
        <taxon>Murinae</taxon>
        <taxon>Mus</taxon>
        <taxon>Mus</taxon>
    </lineage>
</organism>
<protein>
    <recommendedName>
        <fullName>GDP-fucose protein O-fucosyltransferase 1</fullName>
        <ecNumber evidence="8">2.4.1.221</ecNumber>
    </recommendedName>
    <alternativeName>
        <fullName>Peptide-O-fucosyltransferase 1</fullName>
        <shortName>O-FucT-1</shortName>
    </alternativeName>
</protein>
<dbReference type="EC" id="2.4.1.221" evidence="8"/>
<dbReference type="EMBL" id="AF375885">
    <property type="protein sequence ID" value="AAL09577.1"/>
    <property type="molecule type" value="mRNA"/>
</dbReference>
<dbReference type="EMBL" id="AK044629">
    <property type="protein sequence ID" value="BAC32009.1"/>
    <property type="molecule type" value="mRNA"/>
</dbReference>
<dbReference type="EMBL" id="AK132301">
    <property type="protein sequence ID" value="BAE21090.1"/>
    <property type="molecule type" value="mRNA"/>
</dbReference>
<dbReference type="EMBL" id="BC046295">
    <property type="protein sequence ID" value="AAH46295.1"/>
    <property type="molecule type" value="mRNA"/>
</dbReference>
<dbReference type="CCDS" id="CCDS16909.1"/>
<dbReference type="RefSeq" id="NP_536711.3">
    <property type="nucleotide sequence ID" value="NM_080463.3"/>
</dbReference>
<dbReference type="PDB" id="5KXH">
    <property type="method" value="X-ray"/>
    <property type="resolution" value="1.33 A"/>
    <property type="chains" value="A=33-384"/>
</dbReference>
<dbReference type="PDB" id="5KXQ">
    <property type="method" value="X-ray"/>
    <property type="resolution" value="1.90 A"/>
    <property type="chains" value="A/B/C/D=32-385"/>
</dbReference>
<dbReference type="PDB" id="5KY0">
    <property type="method" value="X-ray"/>
    <property type="resolution" value="1.53 A"/>
    <property type="chains" value="A=33-384"/>
</dbReference>
<dbReference type="PDB" id="5KY2">
    <property type="method" value="X-ray"/>
    <property type="resolution" value="1.47 A"/>
    <property type="chains" value="A=33-384"/>
</dbReference>
<dbReference type="PDB" id="5KY3">
    <property type="method" value="X-ray"/>
    <property type="resolution" value="1.53 A"/>
    <property type="chains" value="A=33-384"/>
</dbReference>
<dbReference type="PDB" id="5KY4">
    <property type="method" value="X-ray"/>
    <property type="resolution" value="1.47 A"/>
    <property type="chains" value="A=33-384"/>
</dbReference>
<dbReference type="PDB" id="5KY5">
    <property type="method" value="X-ray"/>
    <property type="resolution" value="1.50 A"/>
    <property type="chains" value="A=33-384"/>
</dbReference>
<dbReference type="PDB" id="5KY7">
    <property type="method" value="X-ray"/>
    <property type="resolution" value="1.60 A"/>
    <property type="chains" value="A=33-384"/>
</dbReference>
<dbReference type="PDB" id="5KY8">
    <property type="method" value="X-ray"/>
    <property type="resolution" value="1.65 A"/>
    <property type="chains" value="A=33-384"/>
</dbReference>
<dbReference type="PDB" id="5KY9">
    <property type="method" value="X-ray"/>
    <property type="resolution" value="1.83 A"/>
    <property type="chains" value="A=33-384"/>
</dbReference>
<dbReference type="PDBsum" id="5KXH"/>
<dbReference type="PDBsum" id="5KXQ"/>
<dbReference type="PDBsum" id="5KY0"/>
<dbReference type="PDBsum" id="5KY2"/>
<dbReference type="PDBsum" id="5KY3"/>
<dbReference type="PDBsum" id="5KY4"/>
<dbReference type="PDBsum" id="5KY5"/>
<dbReference type="PDBsum" id="5KY7"/>
<dbReference type="PDBsum" id="5KY8"/>
<dbReference type="PDBsum" id="5KY9"/>
<dbReference type="SMR" id="Q91ZW2"/>
<dbReference type="BioGRID" id="228259">
    <property type="interactions" value="3"/>
</dbReference>
<dbReference type="FunCoup" id="Q91ZW2">
    <property type="interactions" value="2751"/>
</dbReference>
<dbReference type="STRING" id="10090.ENSMUSP00000053122"/>
<dbReference type="CAZy" id="GT65">
    <property type="family name" value="Glycosyltransferase Family 65"/>
</dbReference>
<dbReference type="GlyConnect" id="2335">
    <property type="glycosylation" value="2 N-Linked glycans (1 site)"/>
</dbReference>
<dbReference type="GlyCosmos" id="Q91ZW2">
    <property type="glycosylation" value="2 sites, 2 glycans"/>
</dbReference>
<dbReference type="GlyGen" id="Q91ZW2">
    <property type="glycosylation" value="3 sites, 2 N-linked glycans (1 site)"/>
</dbReference>
<dbReference type="iPTMnet" id="Q91ZW2"/>
<dbReference type="PhosphoSitePlus" id="Q91ZW2"/>
<dbReference type="SwissPalm" id="Q91ZW2"/>
<dbReference type="PaxDb" id="10090-ENSMUSP00000053122"/>
<dbReference type="PeptideAtlas" id="Q91ZW2"/>
<dbReference type="ProteomicsDB" id="294165"/>
<dbReference type="Pumba" id="Q91ZW2"/>
<dbReference type="Antibodypedia" id="25350">
    <property type="antibodies" value="226 antibodies from 31 providers"/>
</dbReference>
<dbReference type="Ensembl" id="ENSMUST00000049863.12">
    <property type="protein sequence ID" value="ENSMUSP00000053122.6"/>
    <property type="gene ID" value="ENSMUSG00000046020.14"/>
</dbReference>
<dbReference type="GeneID" id="140484"/>
<dbReference type="KEGG" id="mmu:140484"/>
<dbReference type="UCSC" id="uc008nhm.1">
    <property type="organism name" value="mouse"/>
</dbReference>
<dbReference type="AGR" id="MGI:2153207"/>
<dbReference type="CTD" id="23509"/>
<dbReference type="MGI" id="MGI:2153207">
    <property type="gene designation" value="Pofut1"/>
</dbReference>
<dbReference type="VEuPathDB" id="HostDB:ENSMUSG00000046020"/>
<dbReference type="eggNOG" id="KOG3849">
    <property type="taxonomic scope" value="Eukaryota"/>
</dbReference>
<dbReference type="GeneTree" id="ENSGT00390000015634"/>
<dbReference type="InParanoid" id="Q91ZW2"/>
<dbReference type="OMA" id="WQNACRL"/>
<dbReference type="OrthoDB" id="10050276at2759"/>
<dbReference type="PhylomeDB" id="Q91ZW2"/>
<dbReference type="TreeFam" id="TF314805"/>
<dbReference type="BRENDA" id="2.4.1.221">
    <property type="organism ID" value="3474"/>
</dbReference>
<dbReference type="UniPathway" id="UPA00378"/>
<dbReference type="BioGRID-ORCS" id="140484">
    <property type="hits" value="0 hits in 73 CRISPR screens"/>
</dbReference>
<dbReference type="ChiTaRS" id="Pofut1">
    <property type="organism name" value="mouse"/>
</dbReference>
<dbReference type="PRO" id="PR:Q91ZW2"/>
<dbReference type="Proteomes" id="UP000000589">
    <property type="component" value="Chromosome 2"/>
</dbReference>
<dbReference type="RNAct" id="Q91ZW2">
    <property type="molecule type" value="protein"/>
</dbReference>
<dbReference type="Bgee" id="ENSMUSG00000046020">
    <property type="expression patterns" value="Expressed in epithelium of small intestine and 216 other cell types or tissues"/>
</dbReference>
<dbReference type="ExpressionAtlas" id="Q91ZW2">
    <property type="expression patterns" value="baseline and differential"/>
</dbReference>
<dbReference type="GO" id="GO:0005783">
    <property type="term" value="C:endoplasmic reticulum"/>
    <property type="evidence" value="ECO:0007669"/>
    <property type="project" value="UniProtKB-SubCell"/>
</dbReference>
<dbReference type="GO" id="GO:0016020">
    <property type="term" value="C:membrane"/>
    <property type="evidence" value="ECO:0000250"/>
    <property type="project" value="UniProtKB"/>
</dbReference>
<dbReference type="GO" id="GO:0008417">
    <property type="term" value="F:fucosyltransferase activity"/>
    <property type="evidence" value="ECO:0000266"/>
    <property type="project" value="MGI"/>
</dbReference>
<dbReference type="GO" id="GO:0046922">
    <property type="term" value="F:peptide-O-fucosyltransferase activity"/>
    <property type="evidence" value="ECO:0000250"/>
    <property type="project" value="UniProtKB"/>
</dbReference>
<dbReference type="GO" id="GO:0001525">
    <property type="term" value="P:angiogenesis"/>
    <property type="evidence" value="ECO:0000315"/>
    <property type="project" value="MGI"/>
</dbReference>
<dbReference type="GO" id="GO:0006004">
    <property type="term" value="P:fucose metabolic process"/>
    <property type="evidence" value="ECO:0000304"/>
    <property type="project" value="MGI"/>
</dbReference>
<dbReference type="GO" id="GO:0007507">
    <property type="term" value="P:heart development"/>
    <property type="evidence" value="ECO:0000315"/>
    <property type="project" value="MGI"/>
</dbReference>
<dbReference type="GO" id="GO:0007399">
    <property type="term" value="P:nervous system development"/>
    <property type="evidence" value="ECO:0000315"/>
    <property type="project" value="MGI"/>
</dbReference>
<dbReference type="GO" id="GO:0007219">
    <property type="term" value="P:Notch signaling pathway"/>
    <property type="evidence" value="ECO:0000315"/>
    <property type="project" value="UniProtKB"/>
</dbReference>
<dbReference type="GO" id="GO:0036066">
    <property type="term" value="P:protein O-linked fucosylation"/>
    <property type="evidence" value="ECO:0000250"/>
    <property type="project" value="UniProtKB"/>
</dbReference>
<dbReference type="GO" id="GO:0008593">
    <property type="term" value="P:regulation of Notch signaling pathway"/>
    <property type="evidence" value="ECO:0000250"/>
    <property type="project" value="UniProtKB"/>
</dbReference>
<dbReference type="GO" id="GO:0001756">
    <property type="term" value="P:somitogenesis"/>
    <property type="evidence" value="ECO:0000315"/>
    <property type="project" value="MGI"/>
</dbReference>
<dbReference type="CDD" id="cd11302">
    <property type="entry name" value="O-FucT-1"/>
    <property type="match status" value="1"/>
</dbReference>
<dbReference type="DisProt" id="DP02659"/>
<dbReference type="FunFam" id="3.40.50.11340:FF:000001">
    <property type="entry name" value="GDP-fucose protein O-fucosyltransferase 1"/>
    <property type="match status" value="1"/>
</dbReference>
<dbReference type="FunFam" id="3.40.50.11350:FF:000004">
    <property type="entry name" value="GDP-fucose protein O-fucosyltransferase 1"/>
    <property type="match status" value="1"/>
</dbReference>
<dbReference type="Gene3D" id="3.40.50.11340">
    <property type="match status" value="1"/>
</dbReference>
<dbReference type="Gene3D" id="3.40.50.11350">
    <property type="match status" value="1"/>
</dbReference>
<dbReference type="InterPro" id="IPR019378">
    <property type="entry name" value="GDP-Fuc_O-FucTrfase"/>
</dbReference>
<dbReference type="InterPro" id="IPR039922">
    <property type="entry name" value="POFUT1"/>
</dbReference>
<dbReference type="PANTHER" id="PTHR21420">
    <property type="entry name" value="GDP-FUCOSE PROTEIN O-FUCOSYLTRANSFERASE 1"/>
    <property type="match status" value="1"/>
</dbReference>
<dbReference type="PANTHER" id="PTHR21420:SF3">
    <property type="entry name" value="GDP-FUCOSE PROTEIN O-FUCOSYLTRANSFERASE 1"/>
    <property type="match status" value="1"/>
</dbReference>
<dbReference type="Pfam" id="PF10250">
    <property type="entry name" value="O-FucT"/>
    <property type="match status" value="1"/>
</dbReference>